<protein>
    <recommendedName>
        <fullName>ATP synthase subunit delta, mitochondrial</fullName>
    </recommendedName>
    <alternativeName>
        <fullName>F-ATPase delta subunit</fullName>
    </alternativeName>
</protein>
<accession>Q09544</accession>
<evidence type="ECO:0000269" key="1">
    <source>
    </source>
</evidence>
<evidence type="ECO:0000305" key="2"/>
<evidence type="ECO:0000312" key="3">
    <source>
        <dbReference type="WormBase" id="F58F12.1"/>
    </source>
</evidence>
<organism>
    <name type="scientific">Caenorhabditis elegans</name>
    <dbReference type="NCBI Taxonomy" id="6239"/>
    <lineage>
        <taxon>Eukaryota</taxon>
        <taxon>Metazoa</taxon>
        <taxon>Ecdysozoa</taxon>
        <taxon>Nematoda</taxon>
        <taxon>Chromadorea</taxon>
        <taxon>Rhabditida</taxon>
        <taxon>Rhabditina</taxon>
        <taxon>Rhabditomorpha</taxon>
        <taxon>Rhabditoidea</taxon>
        <taxon>Rhabditidae</taxon>
        <taxon>Peloderinae</taxon>
        <taxon>Caenorhabditis</taxon>
    </lineage>
</organism>
<feature type="transit peptide" description="Mitochondrion" evidence="1">
    <location>
        <begin position="1"/>
        <end position="18"/>
    </location>
</feature>
<feature type="chain" id="PRO_0000002665" description="ATP synthase subunit delta, mitochondrial">
    <location>
        <begin position="19"/>
        <end position="163"/>
    </location>
</feature>
<gene>
    <name evidence="3" type="ORF">F58F12.1</name>
</gene>
<sequence>MLARTIQRFSVVAKRGYAAAAPAANANPEELRLTFASPDTAVFSNAVVKQVDVPTLAGMVGVLANHVPTIGVLKPGVVSVTTNEGTVQRLFVSSGTLSVNIDGSCQVLAEEVLKVEEIDESAARAELDAAQRASGEGSEVARAEAQIRAEVAEALIKAATNQQ</sequence>
<name>ATPD_CAEEL</name>
<proteinExistence type="evidence at protein level"/>
<comment type="function">
    <text evidence="2">Mitochondrial membrane ATP synthase (F(1)F(0) ATP synthase or Complex V) produces ATP from ADP in the presence of a proton gradient across the membrane which is generated by electron transport complexes of the respiratory chain. F-type ATPases consist of two structural domains, F(1) - containing the extramembraneous catalytic core, and F(0) - containing the membrane proton channel, linked together by a central stalk and a peripheral stalk. During catalysis, ATP turnover in the catalytic domain of F(1) is coupled via a rotary mechanism of the central stalk subunits to proton translocation. Part of the complex F(1) domain and of the central stalk which is part of the complex rotary element (Probable).</text>
</comment>
<comment type="subunit">
    <text evidence="2">Subunit of the F-type ATPase which has 2 components, CF(1) - the catalytic core - and CF(0) - the membrane proton channel.</text>
</comment>
<comment type="subcellular location">
    <subcellularLocation>
        <location>Mitochondrion</location>
    </subcellularLocation>
    <subcellularLocation>
        <location>Mitochondrion inner membrane</location>
    </subcellularLocation>
</comment>
<comment type="similarity">
    <text evidence="2">Belongs to the ATPase epsilon chain family.</text>
</comment>
<reference key="1">
    <citation type="journal article" date="1998" name="Science">
        <title>Genome sequence of the nematode C. elegans: a platform for investigating biology.</title>
        <authorList>
            <consortium name="The C. elegans sequencing consortium"/>
        </authorList>
    </citation>
    <scope>NUCLEOTIDE SEQUENCE [LARGE SCALE GENOMIC DNA]</scope>
    <source>
        <strain>Bristol N2</strain>
    </source>
</reference>
<reference key="2">
    <citation type="journal article" date="1997" name="Electrophoresis">
        <title>Two-dimensional gel electrophoresis of Caenorhabditis elegans homogenates and identification of protein spots by microsequencing.</title>
        <authorList>
            <person name="Bini L."/>
            <person name="Heid H."/>
            <person name="Liberatori S."/>
            <person name="Geier G."/>
            <person name="Pallini V."/>
            <person name="Zwilling R."/>
        </authorList>
    </citation>
    <scope>PROTEIN SEQUENCE OF 19-36</scope>
    <source>
        <strain>Bristol N2</strain>
    </source>
</reference>
<dbReference type="EMBL" id="BX284602">
    <property type="protein sequence ID" value="CCD72069.1"/>
    <property type="molecule type" value="Genomic_DNA"/>
</dbReference>
<dbReference type="PIR" id="T16501">
    <property type="entry name" value="T16501"/>
</dbReference>
<dbReference type="RefSeq" id="NP_495286.1">
    <property type="nucleotide sequence ID" value="NM_062885.8"/>
</dbReference>
<dbReference type="SMR" id="Q09544"/>
<dbReference type="BioGRID" id="39399">
    <property type="interactions" value="49"/>
</dbReference>
<dbReference type="DIP" id="DIP-27343N"/>
<dbReference type="FunCoup" id="Q09544">
    <property type="interactions" value="2166"/>
</dbReference>
<dbReference type="IntAct" id="Q09544">
    <property type="interactions" value="1"/>
</dbReference>
<dbReference type="STRING" id="6239.F58F12.1.1"/>
<dbReference type="PaxDb" id="6239-F58F12.1"/>
<dbReference type="PeptideAtlas" id="Q09544"/>
<dbReference type="EnsemblMetazoa" id="F58F12.1.1">
    <property type="protein sequence ID" value="F58F12.1.1"/>
    <property type="gene ID" value="WBGene00019061"/>
</dbReference>
<dbReference type="GeneID" id="174059"/>
<dbReference type="KEGG" id="cel:CELE_F58F12.1"/>
<dbReference type="UCSC" id="F58F12.1.1">
    <property type="organism name" value="c. elegans"/>
</dbReference>
<dbReference type="AGR" id="WB:WBGene00019061"/>
<dbReference type="CTD" id="174059"/>
<dbReference type="WormBase" id="F58F12.1">
    <property type="protein sequence ID" value="CE01976"/>
    <property type="gene ID" value="WBGene00019061"/>
</dbReference>
<dbReference type="eggNOG" id="KOG1758">
    <property type="taxonomic scope" value="Eukaryota"/>
</dbReference>
<dbReference type="GeneTree" id="ENSGT00390000017576"/>
<dbReference type="HOGENOM" id="CLU_084338_0_1_1"/>
<dbReference type="InParanoid" id="Q09544"/>
<dbReference type="OMA" id="PHQTIYR"/>
<dbReference type="OrthoDB" id="270171at2759"/>
<dbReference type="PhylomeDB" id="Q09544"/>
<dbReference type="Reactome" id="R-CEL-163210">
    <property type="pathway name" value="Formation of ATP by chemiosmotic coupling"/>
</dbReference>
<dbReference type="Reactome" id="R-CEL-8949613">
    <property type="pathway name" value="Cristae formation"/>
</dbReference>
<dbReference type="PRO" id="PR:Q09544"/>
<dbReference type="Proteomes" id="UP000001940">
    <property type="component" value="Chromosome II"/>
</dbReference>
<dbReference type="Bgee" id="WBGene00019061">
    <property type="expression patterns" value="Expressed in larva and 4 other cell types or tissues"/>
</dbReference>
<dbReference type="GO" id="GO:0005743">
    <property type="term" value="C:mitochondrial inner membrane"/>
    <property type="evidence" value="ECO:0007669"/>
    <property type="project" value="UniProtKB-SubCell"/>
</dbReference>
<dbReference type="GO" id="GO:0005739">
    <property type="term" value="C:mitochondrion"/>
    <property type="evidence" value="ECO:0007005"/>
    <property type="project" value="WormBase"/>
</dbReference>
<dbReference type="GO" id="GO:0045259">
    <property type="term" value="C:proton-transporting ATP synthase complex"/>
    <property type="evidence" value="ECO:0007669"/>
    <property type="project" value="UniProtKB-KW"/>
</dbReference>
<dbReference type="GO" id="GO:0046933">
    <property type="term" value="F:proton-transporting ATP synthase activity, rotational mechanism"/>
    <property type="evidence" value="ECO:0007669"/>
    <property type="project" value="InterPro"/>
</dbReference>
<dbReference type="GO" id="GO:0015986">
    <property type="term" value="P:proton motive force-driven ATP synthesis"/>
    <property type="evidence" value="ECO:0000318"/>
    <property type="project" value="GO_Central"/>
</dbReference>
<dbReference type="CDD" id="cd12152">
    <property type="entry name" value="F1-ATPase_delta"/>
    <property type="match status" value="1"/>
</dbReference>
<dbReference type="FunFam" id="2.60.15.10:FF:000004">
    <property type="entry name" value="ATP synthase subunit delta, mitochondrial"/>
    <property type="match status" value="1"/>
</dbReference>
<dbReference type="Gene3D" id="1.20.5.440">
    <property type="entry name" value="ATP synthase delta/epsilon subunit, C-terminal domain"/>
    <property type="match status" value="1"/>
</dbReference>
<dbReference type="Gene3D" id="2.60.15.10">
    <property type="entry name" value="F0F1 ATP synthase delta/epsilon subunit, N-terminal"/>
    <property type="match status" value="1"/>
</dbReference>
<dbReference type="HAMAP" id="MF_00530">
    <property type="entry name" value="ATP_synth_epsil_bac"/>
    <property type="match status" value="1"/>
</dbReference>
<dbReference type="InterPro" id="IPR001469">
    <property type="entry name" value="ATP_synth_F1_dsu/esu"/>
</dbReference>
<dbReference type="InterPro" id="IPR020546">
    <property type="entry name" value="ATP_synth_F1_dsu/esu_N"/>
</dbReference>
<dbReference type="InterPro" id="IPR036771">
    <property type="entry name" value="ATPsynth_dsu/esu_N"/>
</dbReference>
<dbReference type="NCBIfam" id="TIGR01216">
    <property type="entry name" value="ATP_synt_epsi"/>
    <property type="match status" value="1"/>
</dbReference>
<dbReference type="PANTHER" id="PTHR13822">
    <property type="entry name" value="ATP SYNTHASE DELTA/EPSILON CHAIN"/>
    <property type="match status" value="1"/>
</dbReference>
<dbReference type="PANTHER" id="PTHR13822:SF7">
    <property type="entry name" value="ATP SYNTHASE SUBUNIT DELTA, MITOCHONDRIAL"/>
    <property type="match status" value="1"/>
</dbReference>
<dbReference type="Pfam" id="PF02823">
    <property type="entry name" value="ATP-synt_DE_N"/>
    <property type="match status" value="1"/>
</dbReference>
<dbReference type="SUPFAM" id="SSF51344">
    <property type="entry name" value="Epsilon subunit of F1F0-ATP synthase N-terminal domain"/>
    <property type="match status" value="1"/>
</dbReference>
<keyword id="KW-0066">ATP synthesis</keyword>
<keyword id="KW-0139">CF(1)</keyword>
<keyword id="KW-0903">Direct protein sequencing</keyword>
<keyword id="KW-0375">Hydrogen ion transport</keyword>
<keyword id="KW-0406">Ion transport</keyword>
<keyword id="KW-0472">Membrane</keyword>
<keyword id="KW-0496">Mitochondrion</keyword>
<keyword id="KW-0999">Mitochondrion inner membrane</keyword>
<keyword id="KW-1185">Reference proteome</keyword>
<keyword id="KW-0809">Transit peptide</keyword>
<keyword id="KW-0813">Transport</keyword>